<keyword id="KW-0067">ATP-binding</keyword>
<keyword id="KW-0436">Ligase</keyword>
<keyword id="KW-0460">Magnesium</keyword>
<keyword id="KW-0479">Metal-binding</keyword>
<keyword id="KW-0547">Nucleotide-binding</keyword>
<keyword id="KW-1185">Reference proteome</keyword>
<keyword id="KW-0833">Ubl conjugation pathway</keyword>
<gene>
    <name evidence="1" type="primary">pafA</name>
    <name type="ordered locus">DIP1245</name>
</gene>
<proteinExistence type="inferred from homology"/>
<organism>
    <name type="scientific">Corynebacterium diphtheriae (strain ATCC 700971 / NCTC 13129 / Biotype gravis)</name>
    <dbReference type="NCBI Taxonomy" id="257309"/>
    <lineage>
        <taxon>Bacteria</taxon>
        <taxon>Bacillati</taxon>
        <taxon>Actinomycetota</taxon>
        <taxon>Actinomycetes</taxon>
        <taxon>Mycobacteriales</taxon>
        <taxon>Corynebacteriaceae</taxon>
        <taxon>Corynebacterium</taxon>
    </lineage>
</organism>
<comment type="function">
    <text evidence="1">Catalyzes the covalent attachment of the prokaryotic ubiquitin-like protein modifier Pup to the proteasomal substrate proteins, thereby targeting them for proteasomal degradation. This tagging system is termed pupylation. The ligation reaction involves the side-chain carboxylate of the C-terminal glutamate of Pup and the side-chain amino group of a substrate lysine.</text>
</comment>
<comment type="catalytic activity">
    <reaction evidence="1">
        <text>ATP + [prokaryotic ubiquitin-like protein]-L-glutamate + [protein]-L-lysine = ADP + phosphate + N(6)-([prokaryotic ubiquitin-like protein]-gamma-L-glutamyl)-[protein]-L-lysine.</text>
        <dbReference type="EC" id="6.3.1.19"/>
    </reaction>
</comment>
<comment type="pathway">
    <text evidence="1">Protein degradation; proteasomal Pup-dependent pathway.</text>
</comment>
<comment type="pathway">
    <text evidence="1">Protein modification; protein pupylation.</text>
</comment>
<comment type="miscellaneous">
    <text evidence="1">The reaction mechanism probably proceeds via the activation of Pup by phosphorylation of its C-terminal glutamate, which is then subject to nucleophilic attack by the substrate lysine, resulting in an isopeptide bond and the release of phosphate as a good leaving group.</text>
</comment>
<comment type="similarity">
    <text evidence="1">Belongs to the Pup ligase/Pup deamidase family. Pup-conjugating enzyme subfamily.</text>
</comment>
<sequence>MGEYERTVFTRRITGVETEYGITCVGDNSRRRLGADEAARYMFRPVVEEWGSSNVFIPNGARLYLDVGSHPEYASAECDSLSQLIAYDRAGDKIVDQLAQRAETALATEGIGGRVYLFKNNLDSLGNSYGCHENYLVSRDVVLKTLGRQLLPFLITRQLICGAGSIQDGQFQVSQRADHVWEGVSSATTRSRPIINTRDEPHADSHRFRRLHVIVGDSNMSETTCALKIGSTQLVLEMIEAGALSHDLELSNEIAAIREISRDITGMAPVPLKAGTSMPAIEIQRRYAEKALCWLEQRGDTEGTPNAEMHKVVSLWLDTISAIESNDLQALSRDIDWAIKLSLLRRAQRRIGCSESDFTHPKLAQLDLAYHDIRAGRGVFPVLESKQLVNRWINDTDIEQATRIAPSTTRAALRGEFLTAAKKLQAPISADWLRLKVNRPEPQIIELTDPFENTDDRVDQLISYMRNHAASYSTDTAIS</sequence>
<protein>
    <recommendedName>
        <fullName evidence="1">Pup--protein ligase</fullName>
        <ecNumber evidence="1">6.3.1.19</ecNumber>
    </recommendedName>
    <alternativeName>
        <fullName evidence="1">Proteasome accessory factor A</fullName>
    </alternativeName>
    <alternativeName>
        <fullName evidence="1">Pup-conjugating enzyme</fullName>
    </alternativeName>
</protein>
<name>PAFA_CORDI</name>
<feature type="chain" id="PRO_0000395906" description="Pup--protein ligase">
    <location>
        <begin position="1"/>
        <end position="479"/>
    </location>
</feature>
<feature type="active site" description="Proton acceptor" evidence="1">
    <location>
        <position position="66"/>
    </location>
</feature>
<feature type="binding site" evidence="1">
    <location>
        <position position="17"/>
    </location>
    <ligand>
        <name>Mg(2+)</name>
        <dbReference type="ChEBI" id="CHEBI:18420"/>
    </ligand>
</feature>
<feature type="binding site" evidence="1">
    <location>
        <position position="62"/>
    </location>
    <ligand>
        <name>ATP</name>
        <dbReference type="ChEBI" id="CHEBI:30616"/>
    </ligand>
</feature>
<feature type="binding site" evidence="1">
    <location>
        <position position="64"/>
    </location>
    <ligand>
        <name>Mg(2+)</name>
        <dbReference type="ChEBI" id="CHEBI:18420"/>
    </ligand>
</feature>
<feature type="binding site" evidence="1">
    <location>
        <position position="72"/>
    </location>
    <ligand>
        <name>Mg(2+)</name>
        <dbReference type="ChEBI" id="CHEBI:18420"/>
    </ligand>
</feature>
<feature type="binding site" evidence="1">
    <location>
        <position position="75"/>
    </location>
    <ligand>
        <name>ATP</name>
        <dbReference type="ChEBI" id="CHEBI:30616"/>
    </ligand>
</feature>
<feature type="binding site" evidence="1">
    <location>
        <position position="432"/>
    </location>
    <ligand>
        <name>ATP</name>
        <dbReference type="ChEBI" id="CHEBI:30616"/>
    </ligand>
</feature>
<evidence type="ECO:0000255" key="1">
    <source>
        <dbReference type="HAMAP-Rule" id="MF_02111"/>
    </source>
</evidence>
<accession>Q6NH95</accession>
<dbReference type="EC" id="6.3.1.19" evidence="1"/>
<dbReference type="EMBL" id="BX248357">
    <property type="protein sequence ID" value="CAE49774.1"/>
    <property type="molecule type" value="Genomic_DNA"/>
</dbReference>
<dbReference type="SMR" id="Q6NH95"/>
<dbReference type="STRING" id="257309.DIP1245"/>
<dbReference type="KEGG" id="cdi:DIP1245"/>
<dbReference type="HOGENOM" id="CLU_040524_0_1_11"/>
<dbReference type="UniPathway" id="UPA00997"/>
<dbReference type="UniPathway" id="UPA00998"/>
<dbReference type="Proteomes" id="UP000002198">
    <property type="component" value="Chromosome"/>
</dbReference>
<dbReference type="GO" id="GO:0005524">
    <property type="term" value="F:ATP binding"/>
    <property type="evidence" value="ECO:0007669"/>
    <property type="project" value="UniProtKB-UniRule"/>
</dbReference>
<dbReference type="GO" id="GO:0016879">
    <property type="term" value="F:ligase activity, forming carbon-nitrogen bonds"/>
    <property type="evidence" value="ECO:0007669"/>
    <property type="project" value="InterPro"/>
</dbReference>
<dbReference type="GO" id="GO:0000287">
    <property type="term" value="F:magnesium ion binding"/>
    <property type="evidence" value="ECO:0007669"/>
    <property type="project" value="UniProtKB-UniRule"/>
</dbReference>
<dbReference type="GO" id="GO:0019787">
    <property type="term" value="F:ubiquitin-like protein transferase activity"/>
    <property type="evidence" value="ECO:0007669"/>
    <property type="project" value="UniProtKB-UniRule"/>
</dbReference>
<dbReference type="GO" id="GO:0019941">
    <property type="term" value="P:modification-dependent protein catabolic process"/>
    <property type="evidence" value="ECO:0007669"/>
    <property type="project" value="UniProtKB-UniRule"/>
</dbReference>
<dbReference type="GO" id="GO:0010498">
    <property type="term" value="P:proteasomal protein catabolic process"/>
    <property type="evidence" value="ECO:0007669"/>
    <property type="project" value="UniProtKB-UniRule"/>
</dbReference>
<dbReference type="GO" id="GO:0070490">
    <property type="term" value="P:protein pupylation"/>
    <property type="evidence" value="ECO:0007669"/>
    <property type="project" value="UniProtKB-UniRule"/>
</dbReference>
<dbReference type="HAMAP" id="MF_02111">
    <property type="entry name" value="Pup_ligase"/>
    <property type="match status" value="1"/>
</dbReference>
<dbReference type="InterPro" id="IPR022279">
    <property type="entry name" value="Pup_ligase"/>
</dbReference>
<dbReference type="InterPro" id="IPR004347">
    <property type="entry name" value="Pup_ligase/deamidase"/>
</dbReference>
<dbReference type="NCBIfam" id="TIGR03686">
    <property type="entry name" value="pupylate_PafA"/>
    <property type="match status" value="1"/>
</dbReference>
<dbReference type="PANTHER" id="PTHR42307">
    <property type="entry name" value="PUP DEAMIDASE/DEPUPYLASE"/>
    <property type="match status" value="1"/>
</dbReference>
<dbReference type="PANTHER" id="PTHR42307:SF3">
    <property type="entry name" value="PUP--PROTEIN LIGASE"/>
    <property type="match status" value="1"/>
</dbReference>
<dbReference type="Pfam" id="PF03136">
    <property type="entry name" value="Pup_ligase"/>
    <property type="match status" value="1"/>
</dbReference>
<dbReference type="PIRSF" id="PIRSF018077">
    <property type="entry name" value="UCP018077"/>
    <property type="match status" value="1"/>
</dbReference>
<reference key="1">
    <citation type="journal article" date="2003" name="Nucleic Acids Res.">
        <title>The complete genome sequence and analysis of Corynebacterium diphtheriae NCTC13129.</title>
        <authorList>
            <person name="Cerdeno-Tarraga A.-M."/>
            <person name="Efstratiou A."/>
            <person name="Dover L.G."/>
            <person name="Holden M.T.G."/>
            <person name="Pallen M.J."/>
            <person name="Bentley S.D."/>
            <person name="Besra G.S."/>
            <person name="Churcher C.M."/>
            <person name="James K.D."/>
            <person name="De Zoysa A."/>
            <person name="Chillingworth T."/>
            <person name="Cronin A."/>
            <person name="Dowd L."/>
            <person name="Feltwell T."/>
            <person name="Hamlin N."/>
            <person name="Holroyd S."/>
            <person name="Jagels K."/>
            <person name="Moule S."/>
            <person name="Quail M.A."/>
            <person name="Rabbinowitsch E."/>
            <person name="Rutherford K.M."/>
            <person name="Thomson N.R."/>
            <person name="Unwin L."/>
            <person name="Whitehead S."/>
            <person name="Barrell B.G."/>
            <person name="Parkhill J."/>
        </authorList>
    </citation>
    <scope>NUCLEOTIDE SEQUENCE [LARGE SCALE GENOMIC DNA]</scope>
    <source>
        <strain>ATCC 700971 / NCTC 13129 / Biotype gravis</strain>
    </source>
</reference>